<dbReference type="EC" id="2.1.3.15" evidence="1"/>
<dbReference type="EMBL" id="CP000083">
    <property type="protein sequence ID" value="AAZ27447.1"/>
    <property type="molecule type" value="Genomic_DNA"/>
</dbReference>
<dbReference type="RefSeq" id="WP_011042407.1">
    <property type="nucleotide sequence ID" value="NC_003910.7"/>
</dbReference>
<dbReference type="SMR" id="Q485F2"/>
<dbReference type="STRING" id="167879.CPS_1571"/>
<dbReference type="KEGG" id="cps:CPS_1571"/>
<dbReference type="eggNOG" id="COG0825">
    <property type="taxonomic scope" value="Bacteria"/>
</dbReference>
<dbReference type="HOGENOM" id="CLU_015486_0_2_6"/>
<dbReference type="UniPathway" id="UPA00655">
    <property type="reaction ID" value="UER00711"/>
</dbReference>
<dbReference type="Proteomes" id="UP000000547">
    <property type="component" value="Chromosome"/>
</dbReference>
<dbReference type="GO" id="GO:0009317">
    <property type="term" value="C:acetyl-CoA carboxylase complex"/>
    <property type="evidence" value="ECO:0007669"/>
    <property type="project" value="InterPro"/>
</dbReference>
<dbReference type="GO" id="GO:0003989">
    <property type="term" value="F:acetyl-CoA carboxylase activity"/>
    <property type="evidence" value="ECO:0007669"/>
    <property type="project" value="InterPro"/>
</dbReference>
<dbReference type="GO" id="GO:0005524">
    <property type="term" value="F:ATP binding"/>
    <property type="evidence" value="ECO:0007669"/>
    <property type="project" value="UniProtKB-KW"/>
</dbReference>
<dbReference type="GO" id="GO:0016743">
    <property type="term" value="F:carboxyl- or carbamoyltransferase activity"/>
    <property type="evidence" value="ECO:0007669"/>
    <property type="project" value="UniProtKB-UniRule"/>
</dbReference>
<dbReference type="GO" id="GO:0006633">
    <property type="term" value="P:fatty acid biosynthetic process"/>
    <property type="evidence" value="ECO:0007669"/>
    <property type="project" value="UniProtKB-KW"/>
</dbReference>
<dbReference type="GO" id="GO:2001295">
    <property type="term" value="P:malonyl-CoA biosynthetic process"/>
    <property type="evidence" value="ECO:0007669"/>
    <property type="project" value="UniProtKB-UniRule"/>
</dbReference>
<dbReference type="FunFam" id="3.90.226.10:FF:000008">
    <property type="entry name" value="Acetyl-coenzyme A carboxylase carboxyl transferase subunit alpha"/>
    <property type="match status" value="1"/>
</dbReference>
<dbReference type="Gene3D" id="3.90.226.10">
    <property type="entry name" value="2-enoyl-CoA Hydratase, Chain A, domain 1"/>
    <property type="match status" value="1"/>
</dbReference>
<dbReference type="HAMAP" id="MF_00823">
    <property type="entry name" value="AcetylCoA_CT_alpha"/>
    <property type="match status" value="1"/>
</dbReference>
<dbReference type="InterPro" id="IPR001095">
    <property type="entry name" value="Acetyl_CoA_COase_a_su"/>
</dbReference>
<dbReference type="InterPro" id="IPR029045">
    <property type="entry name" value="ClpP/crotonase-like_dom_sf"/>
</dbReference>
<dbReference type="InterPro" id="IPR011763">
    <property type="entry name" value="COA_CT_C"/>
</dbReference>
<dbReference type="NCBIfam" id="TIGR00513">
    <property type="entry name" value="accA"/>
    <property type="match status" value="1"/>
</dbReference>
<dbReference type="NCBIfam" id="NF041504">
    <property type="entry name" value="AccA_sub"/>
    <property type="match status" value="1"/>
</dbReference>
<dbReference type="NCBIfam" id="NF004344">
    <property type="entry name" value="PRK05724.1"/>
    <property type="match status" value="1"/>
</dbReference>
<dbReference type="PANTHER" id="PTHR42853">
    <property type="entry name" value="ACETYL-COENZYME A CARBOXYLASE CARBOXYL TRANSFERASE SUBUNIT ALPHA"/>
    <property type="match status" value="1"/>
</dbReference>
<dbReference type="PANTHER" id="PTHR42853:SF3">
    <property type="entry name" value="ACETYL-COENZYME A CARBOXYLASE CARBOXYL TRANSFERASE SUBUNIT ALPHA, CHLOROPLASTIC"/>
    <property type="match status" value="1"/>
</dbReference>
<dbReference type="Pfam" id="PF03255">
    <property type="entry name" value="ACCA"/>
    <property type="match status" value="1"/>
</dbReference>
<dbReference type="PRINTS" id="PR01069">
    <property type="entry name" value="ACCCTRFRASEA"/>
</dbReference>
<dbReference type="SUPFAM" id="SSF52096">
    <property type="entry name" value="ClpP/crotonase"/>
    <property type="match status" value="1"/>
</dbReference>
<dbReference type="PROSITE" id="PS50989">
    <property type="entry name" value="COA_CT_CTER"/>
    <property type="match status" value="1"/>
</dbReference>
<evidence type="ECO:0000255" key="1">
    <source>
        <dbReference type="HAMAP-Rule" id="MF_00823"/>
    </source>
</evidence>
<evidence type="ECO:0000255" key="2">
    <source>
        <dbReference type="PROSITE-ProRule" id="PRU01137"/>
    </source>
</evidence>
<proteinExistence type="inferred from homology"/>
<comment type="function">
    <text evidence="1">Component of the acetyl coenzyme A carboxylase (ACC) complex. First, biotin carboxylase catalyzes the carboxylation of biotin on its carrier protein (BCCP) and then the CO(2) group is transferred by the carboxyltransferase to acetyl-CoA to form malonyl-CoA.</text>
</comment>
<comment type="catalytic activity">
    <reaction evidence="1">
        <text>N(6)-carboxybiotinyl-L-lysyl-[protein] + acetyl-CoA = N(6)-biotinyl-L-lysyl-[protein] + malonyl-CoA</text>
        <dbReference type="Rhea" id="RHEA:54728"/>
        <dbReference type="Rhea" id="RHEA-COMP:10505"/>
        <dbReference type="Rhea" id="RHEA-COMP:10506"/>
        <dbReference type="ChEBI" id="CHEBI:57288"/>
        <dbReference type="ChEBI" id="CHEBI:57384"/>
        <dbReference type="ChEBI" id="CHEBI:83144"/>
        <dbReference type="ChEBI" id="CHEBI:83145"/>
        <dbReference type="EC" id="2.1.3.15"/>
    </reaction>
</comment>
<comment type="pathway">
    <text evidence="1">Lipid metabolism; malonyl-CoA biosynthesis; malonyl-CoA from acetyl-CoA: step 1/1.</text>
</comment>
<comment type="subunit">
    <text evidence="1">Acetyl-CoA carboxylase is a heterohexamer composed of biotin carboxyl carrier protein (AccB), biotin carboxylase (AccC) and two subunits each of ACCase subunit alpha (AccA) and ACCase subunit beta (AccD).</text>
</comment>
<comment type="subcellular location">
    <subcellularLocation>
        <location evidence="1">Cytoplasm</location>
    </subcellularLocation>
</comment>
<comment type="similarity">
    <text evidence="1">Belongs to the AccA family.</text>
</comment>
<sequence length="318" mass="35245">MSLNFLDFEQPIAELDAKIEELQLVNNGQELDLDIEDQISQLREKNKEQTKKIFSNLDAWQTARVARHPQRPYSLDYIPRIFTEFDELAGDRAYANDNAIVGGTARLDGKPVMIIGHQKGRSTAEKVKRNFGMPRPEGYRKALRLMEMAERFNMPIITFIDTPGAYPGVGAEERGQSEAIARNLKVMARLSVPIICTVIGEGGSGGALAIGVGDRVNMLQYATYSVISPEGCASILWKTAEKAPTAAAAMGITAQRIKELDLINSIVEEPLGGAHRDMDVMAAHLKQAIKKDLSELEGLSKDELIEQRYDRLMSFGYC</sequence>
<feature type="chain" id="PRO_0000223762" description="Acetyl-coenzyme A carboxylase carboxyl transferase subunit alpha">
    <location>
        <begin position="1"/>
        <end position="318"/>
    </location>
</feature>
<feature type="domain" description="CoA carboxyltransferase C-terminal" evidence="2">
    <location>
        <begin position="34"/>
        <end position="295"/>
    </location>
</feature>
<name>ACCA_COLP3</name>
<protein>
    <recommendedName>
        <fullName evidence="1">Acetyl-coenzyme A carboxylase carboxyl transferase subunit alpha</fullName>
        <shortName evidence="1">ACCase subunit alpha</shortName>
        <shortName evidence="1">Acetyl-CoA carboxylase carboxyltransferase subunit alpha</shortName>
        <ecNumber evidence="1">2.1.3.15</ecNumber>
    </recommendedName>
</protein>
<gene>
    <name evidence="1" type="primary">accA</name>
    <name type="ordered locus">CPS_1571</name>
</gene>
<keyword id="KW-0067">ATP-binding</keyword>
<keyword id="KW-0963">Cytoplasm</keyword>
<keyword id="KW-0275">Fatty acid biosynthesis</keyword>
<keyword id="KW-0276">Fatty acid metabolism</keyword>
<keyword id="KW-0444">Lipid biosynthesis</keyword>
<keyword id="KW-0443">Lipid metabolism</keyword>
<keyword id="KW-0547">Nucleotide-binding</keyword>
<keyword id="KW-0808">Transferase</keyword>
<accession>Q485F2</accession>
<organism>
    <name type="scientific">Colwellia psychrerythraea (strain 34H / ATCC BAA-681)</name>
    <name type="common">Vibrio psychroerythus</name>
    <dbReference type="NCBI Taxonomy" id="167879"/>
    <lineage>
        <taxon>Bacteria</taxon>
        <taxon>Pseudomonadati</taxon>
        <taxon>Pseudomonadota</taxon>
        <taxon>Gammaproteobacteria</taxon>
        <taxon>Alteromonadales</taxon>
        <taxon>Colwelliaceae</taxon>
        <taxon>Colwellia</taxon>
    </lineage>
</organism>
<reference key="1">
    <citation type="journal article" date="2005" name="Proc. Natl. Acad. Sci. U.S.A.">
        <title>The psychrophilic lifestyle as revealed by the genome sequence of Colwellia psychrerythraea 34H through genomic and proteomic analyses.</title>
        <authorList>
            <person name="Methe B.A."/>
            <person name="Nelson K.E."/>
            <person name="Deming J.W."/>
            <person name="Momen B."/>
            <person name="Melamud E."/>
            <person name="Zhang X."/>
            <person name="Moult J."/>
            <person name="Madupu R."/>
            <person name="Nelson W.C."/>
            <person name="Dodson R.J."/>
            <person name="Brinkac L.M."/>
            <person name="Daugherty S.C."/>
            <person name="Durkin A.S."/>
            <person name="DeBoy R.T."/>
            <person name="Kolonay J.F."/>
            <person name="Sullivan S.A."/>
            <person name="Zhou L."/>
            <person name="Davidsen T.M."/>
            <person name="Wu M."/>
            <person name="Huston A.L."/>
            <person name="Lewis M."/>
            <person name="Weaver B."/>
            <person name="Weidman J.F."/>
            <person name="Khouri H."/>
            <person name="Utterback T.R."/>
            <person name="Feldblyum T.V."/>
            <person name="Fraser C.M."/>
        </authorList>
    </citation>
    <scope>NUCLEOTIDE SEQUENCE [LARGE SCALE GENOMIC DNA]</scope>
    <source>
        <strain>34H / ATCC BAA-681</strain>
    </source>
</reference>